<proteinExistence type="inferred from homology"/>
<dbReference type="EMBL" id="JQ045572">
    <property type="protein sequence ID" value="AFD62207.1"/>
    <property type="molecule type" value="Genomic_DNA"/>
</dbReference>
<dbReference type="EMBL" id="JH597954">
    <property type="status" value="NOT_ANNOTATED_CDS"/>
    <property type="molecule type" value="Genomic_DNA"/>
</dbReference>
<dbReference type="InParanoid" id="H9BPR8"/>
<dbReference type="PHI-base" id="PHI:4771"/>
<dbReference type="Proteomes" id="UP000011713">
    <property type="component" value="Unassembled WGS sequence"/>
</dbReference>
<dbReference type="GO" id="GO:0005576">
    <property type="term" value="C:extracellular region"/>
    <property type="evidence" value="ECO:0007669"/>
    <property type="project" value="UniProtKB-SubCell"/>
</dbReference>
<dbReference type="GO" id="GO:0043657">
    <property type="term" value="C:host cell"/>
    <property type="evidence" value="ECO:0007669"/>
    <property type="project" value="UniProtKB-SubCell"/>
</dbReference>
<feature type="signal peptide" evidence="1">
    <location>
        <begin position="1"/>
        <end position="20"/>
    </location>
</feature>
<feature type="chain" id="PRO_5003618370" description="Avirulence protein ATR39-1">
    <location>
        <begin position="21"/>
        <end position="185"/>
    </location>
</feature>
<feature type="short sequence motif" description="RxLR-dEER" evidence="5">
    <location>
        <begin position="49"/>
        <end position="66"/>
    </location>
</feature>
<gene>
    <name evidence="3" type="primary">ATR39-1</name>
</gene>
<organism>
    <name type="scientific">Hyaloperonospora arabidopsidis (strain Emoy2)</name>
    <name type="common">Downy mildew agent</name>
    <name type="synonym">Peronospora arabidopsidis</name>
    <dbReference type="NCBI Taxonomy" id="559515"/>
    <lineage>
        <taxon>Eukaryota</taxon>
        <taxon>Sar</taxon>
        <taxon>Stramenopiles</taxon>
        <taxon>Oomycota</taxon>
        <taxon>Peronosporales</taxon>
        <taxon>Peronosporaceae</taxon>
        <taxon>Hyaloperonospora</taxon>
    </lineage>
</organism>
<comment type="function">
    <text evidence="2">Secreted effector that acts as an elicitor of hypersensitive response (HR) specifically on plants carrying defense protein RPP39 (PubMed:22359513). The allele ATR39-1 is recognized by RPP39, whereas the ATR39-2 allele is not recognized (PubMed:22359513).</text>
</comment>
<comment type="subcellular location">
    <subcellularLocation>
        <location evidence="5">Secreted</location>
    </subcellularLocation>
    <subcellularLocation>
        <location evidence="5">Host cell</location>
    </subcellularLocation>
</comment>
<comment type="domain">
    <text evidence="5">The RxLR-dEER motif acts to carry the protein into the host cell cytoplasm through binding to cell surface phosphatidylinositol-3-phosphate.</text>
</comment>
<comment type="miscellaneous">
    <text evidence="2">ATR39 has 2 polymorphic alleles that are highly conserved among Hyaloperonospora arabidopsidis isolate. This conservation is in stark contrast with other characterized H.arabidopsidis effectors ATR1, ATR5 and ATR13, which are highly divergent. The presence of amino acids 'Glu-168' and 'Val-169' in ATR39-2 blocks recognition by host defense protein RPP39.</text>
</comment>
<comment type="similarity">
    <text evidence="4">Belongs to the RxLR effector family.</text>
</comment>
<name>AT391_HYAAE</name>
<sequence>MVKCTPLLALTVIVSAGSDALSDPTVKRLAKLATINQAPATQSNSDSKRVLRASDVPDEVAAGESRSPKSLWPWEVEDKLAPLKEKLISTSADDLEAGGSANKNALPMIWRWLWQNQIETKKTPIDEISKEVQTAMDLISSQATHEELNKAGVSVSDYVKALRFTLSDIDVVNRGMEYNIHLGNK</sequence>
<accession>H9BPR8</accession>
<evidence type="ECO:0000255" key="1"/>
<evidence type="ECO:0000269" key="2">
    <source>
    </source>
</evidence>
<evidence type="ECO:0000303" key="3">
    <source>
    </source>
</evidence>
<evidence type="ECO:0000305" key="4"/>
<evidence type="ECO:0000305" key="5">
    <source>
    </source>
</evidence>
<reference key="1">
    <citation type="journal article" date="2012" name="PLoS Genet.">
        <title>Computational prediction and molecular characterization of an oomycete effector and the cognate Arabidopsis resistance gene.</title>
        <authorList>
            <person name="Goritschnig S."/>
            <person name="Krasileva K.V."/>
            <person name="Dahlbeck D."/>
            <person name="Staskawicz B.J."/>
        </authorList>
    </citation>
    <scope>NUCLEOTIDE SEQUENCE [GENOMIC DNA]</scope>
    <scope>FUNCTION</scope>
    <source>
        <strain>Emoy2</strain>
    </source>
</reference>
<reference key="2">
    <citation type="journal article" date="2010" name="Science">
        <title>Signatures of adaptation to obligate biotrophy in the Hyaloperonospora arabidopsidis genome.</title>
        <authorList>
            <person name="Baxter L."/>
            <person name="Tripathy S."/>
            <person name="Ishaque N."/>
            <person name="Boot N."/>
            <person name="Cabral A."/>
            <person name="Kemen E."/>
            <person name="Thines M."/>
            <person name="Ah-Fong A."/>
            <person name="Anderson R."/>
            <person name="Badejoko W."/>
            <person name="Bittner-Eddy P."/>
            <person name="Boore J.L."/>
            <person name="Chibucos M.C."/>
            <person name="Coates M."/>
            <person name="Dehal P."/>
            <person name="Delehaunty K."/>
            <person name="Dong S."/>
            <person name="Downton P."/>
            <person name="Dumas B."/>
            <person name="Fabro G."/>
            <person name="Fronick C."/>
            <person name="Fuerstenberg S.I."/>
            <person name="Fulton L."/>
            <person name="Gaulin E."/>
            <person name="Govers F."/>
            <person name="Hughes L."/>
            <person name="Humphray S."/>
            <person name="Jiang R.H."/>
            <person name="Judelson H."/>
            <person name="Kamoun S."/>
            <person name="Kyung K."/>
            <person name="Meijer H."/>
            <person name="Minx P."/>
            <person name="Morris P."/>
            <person name="Nelson J."/>
            <person name="Phuntumart V."/>
            <person name="Qutob D."/>
            <person name="Rehmany A."/>
            <person name="Rougon-Cardoso A."/>
            <person name="Ryden P."/>
            <person name="Torto-Alalibo T."/>
            <person name="Studholme D."/>
            <person name="Wang Y."/>
            <person name="Win J."/>
            <person name="Wood J."/>
            <person name="Clifton S.W."/>
            <person name="Rogers J."/>
            <person name="Van den Ackerveken G."/>
            <person name="Jones J.D."/>
            <person name="McDowell J.M."/>
            <person name="Beynon J."/>
            <person name="Tyler B.M."/>
        </authorList>
    </citation>
    <scope>NUCLEOTIDE SEQUENCE [LARGE SCALE GENOMIC DNA]</scope>
    <source>
        <strain>Emoy2</strain>
    </source>
</reference>
<protein>
    <recommendedName>
        <fullName evidence="3">Avirulence protein ATR39-1</fullName>
    </recommendedName>
    <alternativeName>
        <fullName evidence="3">Arabidopsis thaliana recognized protein 39-1</fullName>
    </alternativeName>
</protein>
<keyword id="KW-1185">Reference proteome</keyword>
<keyword id="KW-0964">Secreted</keyword>
<keyword id="KW-0732">Signal</keyword>
<keyword id="KW-0843">Virulence</keyword>